<evidence type="ECO:0000255" key="1">
    <source>
        <dbReference type="HAMAP-Rule" id="MF_00291"/>
    </source>
</evidence>
<evidence type="ECO:0000305" key="2"/>
<name>RS2_LISMO</name>
<comment type="similarity">
    <text evidence="1">Belongs to the universal ribosomal protein uS2 family.</text>
</comment>
<feature type="chain" id="PRO_0000134192" description="Small ribosomal subunit protein uS2">
    <location>
        <begin position="1"/>
        <end position="249"/>
    </location>
</feature>
<reference key="1">
    <citation type="journal article" date="2001" name="Science">
        <title>Comparative genomics of Listeria species.</title>
        <authorList>
            <person name="Glaser P."/>
            <person name="Frangeul L."/>
            <person name="Buchrieser C."/>
            <person name="Rusniok C."/>
            <person name="Amend A."/>
            <person name="Baquero F."/>
            <person name="Berche P."/>
            <person name="Bloecker H."/>
            <person name="Brandt P."/>
            <person name="Chakraborty T."/>
            <person name="Charbit A."/>
            <person name="Chetouani F."/>
            <person name="Couve E."/>
            <person name="de Daruvar A."/>
            <person name="Dehoux P."/>
            <person name="Domann E."/>
            <person name="Dominguez-Bernal G."/>
            <person name="Duchaud E."/>
            <person name="Durant L."/>
            <person name="Dussurget O."/>
            <person name="Entian K.-D."/>
            <person name="Fsihi H."/>
            <person name="Garcia-del Portillo F."/>
            <person name="Garrido P."/>
            <person name="Gautier L."/>
            <person name="Goebel W."/>
            <person name="Gomez-Lopez N."/>
            <person name="Hain T."/>
            <person name="Hauf J."/>
            <person name="Jackson D."/>
            <person name="Jones L.-M."/>
            <person name="Kaerst U."/>
            <person name="Kreft J."/>
            <person name="Kuhn M."/>
            <person name="Kunst F."/>
            <person name="Kurapkat G."/>
            <person name="Madueno E."/>
            <person name="Maitournam A."/>
            <person name="Mata Vicente J."/>
            <person name="Ng E."/>
            <person name="Nedjari H."/>
            <person name="Nordsiek G."/>
            <person name="Novella S."/>
            <person name="de Pablos B."/>
            <person name="Perez-Diaz J.-C."/>
            <person name="Purcell R."/>
            <person name="Remmel B."/>
            <person name="Rose M."/>
            <person name="Schlueter T."/>
            <person name="Simoes N."/>
            <person name="Tierrez A."/>
            <person name="Vazquez-Boland J.-A."/>
            <person name="Voss H."/>
            <person name="Wehland J."/>
            <person name="Cossart P."/>
        </authorList>
    </citation>
    <scope>NUCLEOTIDE SEQUENCE [LARGE SCALE GENOMIC DNA]</scope>
    <source>
        <strain>ATCC BAA-679 / EGD-e</strain>
    </source>
</reference>
<accession>Q8Y6M6</accession>
<protein>
    <recommendedName>
        <fullName evidence="1">Small ribosomal subunit protein uS2</fullName>
    </recommendedName>
    <alternativeName>
        <fullName evidence="2">30S ribosomal protein S2</fullName>
    </alternativeName>
</protein>
<sequence>MPVISMKQLLEAGVHFGHQTRRWNPKMKKYIFTERNGIYIIDLQKTVKKVDEAFNFMREVASDNGTILFVGTKKQAQESVRDEAIRSGQYFVNHRWLGGTLTNFETIQKRIQHLKKIERMEADGTFEVLPKKEVVLLKKEQEKLERFLGGIKDMKGLPDALFIVDPRKERIAVAEARKLHIPIIGIVDTNCDPDEIDYVIPANDDAIRAVKLLTAKMADAIIEVNQGEELTEAEVAPVEEKATEETTEA</sequence>
<organism>
    <name type="scientific">Listeria monocytogenes serovar 1/2a (strain ATCC BAA-679 / EGD-e)</name>
    <dbReference type="NCBI Taxonomy" id="169963"/>
    <lineage>
        <taxon>Bacteria</taxon>
        <taxon>Bacillati</taxon>
        <taxon>Bacillota</taxon>
        <taxon>Bacilli</taxon>
        <taxon>Bacillales</taxon>
        <taxon>Listeriaceae</taxon>
        <taxon>Listeria</taxon>
    </lineage>
</organism>
<gene>
    <name evidence="1" type="primary">rpsB</name>
    <name type="ordered locus">lmo1658</name>
</gene>
<keyword id="KW-0002">3D-structure</keyword>
<keyword id="KW-1185">Reference proteome</keyword>
<keyword id="KW-0687">Ribonucleoprotein</keyword>
<keyword id="KW-0689">Ribosomal protein</keyword>
<dbReference type="EMBL" id="AL591980">
    <property type="protein sequence ID" value="CAC99736.1"/>
    <property type="molecule type" value="Genomic_DNA"/>
</dbReference>
<dbReference type="PIR" id="AB1282">
    <property type="entry name" value="AB1282"/>
</dbReference>
<dbReference type="RefSeq" id="NP_465183.1">
    <property type="nucleotide sequence ID" value="NC_003210.1"/>
</dbReference>
<dbReference type="RefSeq" id="WP_003723971.1">
    <property type="nucleotide sequence ID" value="NZ_CP149495.1"/>
</dbReference>
<dbReference type="PDB" id="7NHN">
    <property type="method" value="EM"/>
    <property type="resolution" value="2.90 A"/>
    <property type="chains" value="c=1-249"/>
</dbReference>
<dbReference type="PDBsum" id="7NHN"/>
<dbReference type="EMDB" id="EMD-12334"/>
<dbReference type="SMR" id="Q8Y6M6"/>
<dbReference type="STRING" id="169963.gene:17594315"/>
<dbReference type="PaxDb" id="169963-lmo1658"/>
<dbReference type="EnsemblBacteria" id="CAC99736">
    <property type="protein sequence ID" value="CAC99736"/>
    <property type="gene ID" value="CAC99736"/>
</dbReference>
<dbReference type="GeneID" id="93239536"/>
<dbReference type="GeneID" id="985326"/>
<dbReference type="KEGG" id="lmo:lmo1658"/>
<dbReference type="PATRIC" id="fig|169963.11.peg.1701"/>
<dbReference type="eggNOG" id="COG0052">
    <property type="taxonomic scope" value="Bacteria"/>
</dbReference>
<dbReference type="HOGENOM" id="CLU_040318_1_2_9"/>
<dbReference type="OrthoDB" id="9808036at2"/>
<dbReference type="PhylomeDB" id="Q8Y6M6"/>
<dbReference type="BioCyc" id="LMON169963:LMO1658-MONOMER"/>
<dbReference type="Proteomes" id="UP000000817">
    <property type="component" value="Chromosome"/>
</dbReference>
<dbReference type="GO" id="GO:0022627">
    <property type="term" value="C:cytosolic small ribosomal subunit"/>
    <property type="evidence" value="ECO:0000318"/>
    <property type="project" value="GO_Central"/>
</dbReference>
<dbReference type="GO" id="GO:0003735">
    <property type="term" value="F:structural constituent of ribosome"/>
    <property type="evidence" value="ECO:0000318"/>
    <property type="project" value="GO_Central"/>
</dbReference>
<dbReference type="GO" id="GO:0006412">
    <property type="term" value="P:translation"/>
    <property type="evidence" value="ECO:0007669"/>
    <property type="project" value="UniProtKB-UniRule"/>
</dbReference>
<dbReference type="CDD" id="cd01425">
    <property type="entry name" value="RPS2"/>
    <property type="match status" value="1"/>
</dbReference>
<dbReference type="FunFam" id="1.10.287.610:FF:000001">
    <property type="entry name" value="30S ribosomal protein S2"/>
    <property type="match status" value="1"/>
</dbReference>
<dbReference type="Gene3D" id="3.40.50.10490">
    <property type="entry name" value="Glucose-6-phosphate isomerase like protein, domain 1"/>
    <property type="match status" value="1"/>
</dbReference>
<dbReference type="Gene3D" id="1.10.287.610">
    <property type="entry name" value="Helix hairpin bin"/>
    <property type="match status" value="1"/>
</dbReference>
<dbReference type="HAMAP" id="MF_00291_B">
    <property type="entry name" value="Ribosomal_uS2_B"/>
    <property type="match status" value="1"/>
</dbReference>
<dbReference type="InterPro" id="IPR001865">
    <property type="entry name" value="Ribosomal_uS2"/>
</dbReference>
<dbReference type="InterPro" id="IPR005706">
    <property type="entry name" value="Ribosomal_uS2_bac/mit/plastid"/>
</dbReference>
<dbReference type="InterPro" id="IPR018130">
    <property type="entry name" value="Ribosomal_uS2_CS"/>
</dbReference>
<dbReference type="InterPro" id="IPR023591">
    <property type="entry name" value="Ribosomal_uS2_flav_dom_sf"/>
</dbReference>
<dbReference type="NCBIfam" id="TIGR01011">
    <property type="entry name" value="rpsB_bact"/>
    <property type="match status" value="1"/>
</dbReference>
<dbReference type="PANTHER" id="PTHR12534">
    <property type="entry name" value="30S RIBOSOMAL PROTEIN S2 PROKARYOTIC AND ORGANELLAR"/>
    <property type="match status" value="1"/>
</dbReference>
<dbReference type="PANTHER" id="PTHR12534:SF0">
    <property type="entry name" value="SMALL RIBOSOMAL SUBUNIT PROTEIN US2M"/>
    <property type="match status" value="1"/>
</dbReference>
<dbReference type="Pfam" id="PF00318">
    <property type="entry name" value="Ribosomal_S2"/>
    <property type="match status" value="1"/>
</dbReference>
<dbReference type="PRINTS" id="PR00395">
    <property type="entry name" value="RIBOSOMALS2"/>
</dbReference>
<dbReference type="SUPFAM" id="SSF52313">
    <property type="entry name" value="Ribosomal protein S2"/>
    <property type="match status" value="1"/>
</dbReference>
<dbReference type="PROSITE" id="PS00962">
    <property type="entry name" value="RIBOSOMAL_S2_1"/>
    <property type="match status" value="1"/>
</dbReference>
<dbReference type="PROSITE" id="PS00963">
    <property type="entry name" value="RIBOSOMAL_S2_2"/>
    <property type="match status" value="1"/>
</dbReference>
<proteinExistence type="evidence at protein level"/>